<organism>
    <name type="scientific">Opitutus terrae (strain DSM 11246 / JCM 15787 / PB90-1)</name>
    <dbReference type="NCBI Taxonomy" id="452637"/>
    <lineage>
        <taxon>Bacteria</taxon>
        <taxon>Pseudomonadati</taxon>
        <taxon>Verrucomicrobiota</taxon>
        <taxon>Opitutia</taxon>
        <taxon>Opitutales</taxon>
        <taxon>Opitutaceae</taxon>
        <taxon>Opitutus</taxon>
    </lineage>
</organism>
<reference key="1">
    <citation type="journal article" date="2011" name="J. Bacteriol.">
        <title>Genome sequence of the verrucomicrobium Opitutus terrae PB90-1, an abundant inhabitant of rice paddy soil ecosystems.</title>
        <authorList>
            <person name="van Passel M.W."/>
            <person name="Kant R."/>
            <person name="Palva A."/>
            <person name="Copeland A."/>
            <person name="Lucas S."/>
            <person name="Lapidus A."/>
            <person name="Glavina del Rio T."/>
            <person name="Pitluck S."/>
            <person name="Goltsman E."/>
            <person name="Clum A."/>
            <person name="Sun H."/>
            <person name="Schmutz J."/>
            <person name="Larimer F.W."/>
            <person name="Land M.L."/>
            <person name="Hauser L."/>
            <person name="Kyrpides N."/>
            <person name="Mikhailova N."/>
            <person name="Richardson P.P."/>
            <person name="Janssen P.H."/>
            <person name="de Vos W.M."/>
            <person name="Smidt H."/>
        </authorList>
    </citation>
    <scope>NUCLEOTIDE SEQUENCE [LARGE SCALE GENOMIC DNA]</scope>
    <source>
        <strain>DSM 11246 / JCM 15787 / PB90-1</strain>
    </source>
</reference>
<dbReference type="EC" id="3.5.1.88" evidence="1"/>
<dbReference type="EMBL" id="CP001032">
    <property type="protein sequence ID" value="ACB73388.1"/>
    <property type="molecule type" value="Genomic_DNA"/>
</dbReference>
<dbReference type="RefSeq" id="WP_012372926.1">
    <property type="nucleotide sequence ID" value="NC_010571.1"/>
</dbReference>
<dbReference type="SMR" id="B1ZMD5"/>
<dbReference type="STRING" id="452637.Oter_0097"/>
<dbReference type="KEGG" id="ote:Oter_0097"/>
<dbReference type="eggNOG" id="COG0242">
    <property type="taxonomic scope" value="Bacteria"/>
</dbReference>
<dbReference type="HOGENOM" id="CLU_061901_4_2_0"/>
<dbReference type="OrthoDB" id="9784988at2"/>
<dbReference type="Proteomes" id="UP000007013">
    <property type="component" value="Chromosome"/>
</dbReference>
<dbReference type="GO" id="GO:0046872">
    <property type="term" value="F:metal ion binding"/>
    <property type="evidence" value="ECO:0007669"/>
    <property type="project" value="UniProtKB-KW"/>
</dbReference>
<dbReference type="GO" id="GO:0042586">
    <property type="term" value="F:peptide deformylase activity"/>
    <property type="evidence" value="ECO:0007669"/>
    <property type="project" value="UniProtKB-UniRule"/>
</dbReference>
<dbReference type="GO" id="GO:0043686">
    <property type="term" value="P:co-translational protein modification"/>
    <property type="evidence" value="ECO:0007669"/>
    <property type="project" value="TreeGrafter"/>
</dbReference>
<dbReference type="GO" id="GO:0006412">
    <property type="term" value="P:translation"/>
    <property type="evidence" value="ECO:0007669"/>
    <property type="project" value="UniProtKB-UniRule"/>
</dbReference>
<dbReference type="CDD" id="cd00487">
    <property type="entry name" value="Pep_deformylase"/>
    <property type="match status" value="1"/>
</dbReference>
<dbReference type="Gene3D" id="3.90.45.10">
    <property type="entry name" value="Peptide deformylase"/>
    <property type="match status" value="1"/>
</dbReference>
<dbReference type="HAMAP" id="MF_00163">
    <property type="entry name" value="Pep_deformylase"/>
    <property type="match status" value="1"/>
</dbReference>
<dbReference type="InterPro" id="IPR023635">
    <property type="entry name" value="Peptide_deformylase"/>
</dbReference>
<dbReference type="InterPro" id="IPR036821">
    <property type="entry name" value="Peptide_deformylase_sf"/>
</dbReference>
<dbReference type="NCBIfam" id="TIGR00079">
    <property type="entry name" value="pept_deformyl"/>
    <property type="match status" value="1"/>
</dbReference>
<dbReference type="NCBIfam" id="NF001159">
    <property type="entry name" value="PRK00150.1-3"/>
    <property type="match status" value="1"/>
</dbReference>
<dbReference type="PANTHER" id="PTHR10458">
    <property type="entry name" value="PEPTIDE DEFORMYLASE"/>
    <property type="match status" value="1"/>
</dbReference>
<dbReference type="PANTHER" id="PTHR10458:SF22">
    <property type="entry name" value="PEPTIDE DEFORMYLASE"/>
    <property type="match status" value="1"/>
</dbReference>
<dbReference type="Pfam" id="PF01327">
    <property type="entry name" value="Pep_deformylase"/>
    <property type="match status" value="1"/>
</dbReference>
<dbReference type="PIRSF" id="PIRSF004749">
    <property type="entry name" value="Pep_def"/>
    <property type="match status" value="1"/>
</dbReference>
<dbReference type="PRINTS" id="PR01576">
    <property type="entry name" value="PDEFORMYLASE"/>
</dbReference>
<dbReference type="SUPFAM" id="SSF56420">
    <property type="entry name" value="Peptide deformylase"/>
    <property type="match status" value="1"/>
</dbReference>
<comment type="function">
    <text evidence="1">Removes the formyl group from the N-terminal Met of newly synthesized proteins. Requires at least a dipeptide for an efficient rate of reaction. N-terminal L-methionine is a prerequisite for activity but the enzyme has broad specificity at other positions.</text>
</comment>
<comment type="catalytic activity">
    <reaction evidence="1">
        <text>N-terminal N-formyl-L-methionyl-[peptide] + H2O = N-terminal L-methionyl-[peptide] + formate</text>
        <dbReference type="Rhea" id="RHEA:24420"/>
        <dbReference type="Rhea" id="RHEA-COMP:10639"/>
        <dbReference type="Rhea" id="RHEA-COMP:10640"/>
        <dbReference type="ChEBI" id="CHEBI:15377"/>
        <dbReference type="ChEBI" id="CHEBI:15740"/>
        <dbReference type="ChEBI" id="CHEBI:49298"/>
        <dbReference type="ChEBI" id="CHEBI:64731"/>
        <dbReference type="EC" id="3.5.1.88"/>
    </reaction>
</comment>
<comment type="cofactor">
    <cofactor evidence="1">
        <name>Fe(2+)</name>
        <dbReference type="ChEBI" id="CHEBI:29033"/>
    </cofactor>
    <text evidence="1">Binds 1 Fe(2+) ion.</text>
</comment>
<comment type="similarity">
    <text evidence="1">Belongs to the polypeptide deformylase family.</text>
</comment>
<gene>
    <name evidence="1" type="primary">def</name>
    <name type="ordered locus">Oter_0097</name>
</gene>
<name>DEF_OPITP</name>
<protein>
    <recommendedName>
        <fullName evidence="1">Peptide deformylase</fullName>
        <shortName evidence="1">PDF</shortName>
        <ecNumber evidence="1">3.5.1.88</ecNumber>
    </recommendedName>
    <alternativeName>
        <fullName evidence="1">Polypeptide deformylase</fullName>
    </alternativeName>
</protein>
<accession>B1ZMD5</accession>
<evidence type="ECO:0000255" key="1">
    <source>
        <dbReference type="HAMAP-Rule" id="MF_00163"/>
    </source>
</evidence>
<feature type="chain" id="PRO_1000097328" description="Peptide deformylase">
    <location>
        <begin position="1"/>
        <end position="192"/>
    </location>
</feature>
<feature type="active site" evidence="1">
    <location>
        <position position="151"/>
    </location>
</feature>
<feature type="binding site" evidence="1">
    <location>
        <position position="108"/>
    </location>
    <ligand>
        <name>Fe cation</name>
        <dbReference type="ChEBI" id="CHEBI:24875"/>
    </ligand>
</feature>
<feature type="binding site" evidence="1">
    <location>
        <position position="150"/>
    </location>
    <ligand>
        <name>Fe cation</name>
        <dbReference type="ChEBI" id="CHEBI:24875"/>
    </ligand>
</feature>
<feature type="binding site" evidence="1">
    <location>
        <position position="154"/>
    </location>
    <ligand>
        <name>Fe cation</name>
        <dbReference type="ChEBI" id="CHEBI:24875"/>
    </ligand>
</feature>
<keyword id="KW-0378">Hydrolase</keyword>
<keyword id="KW-0408">Iron</keyword>
<keyword id="KW-0479">Metal-binding</keyword>
<keyword id="KW-0648">Protein biosynthesis</keyword>
<keyword id="KW-1185">Reference proteome</keyword>
<proteinExistence type="inferred from homology"/>
<sequence length="192" mass="21428">MSLRIVHYNDPVLRRKGEKITAFDKALSQLAKEMLATMQEAAGIGLAAQQIGRPVQLCVVDLRRAEIDFTWELDGAKPPLDLIMPMIITNPEITPDRETDVYLVEEGCLSFPKIRGDVPRPDAITVRYQDEHGTPHTLHCDGLLARCIQHEVDHLNGVLFIDRMEKKTRAAIDADVKTLAKITRAAAKLNPA</sequence>